<feature type="signal peptide" evidence="1">
    <location>
        <begin position="1"/>
        <end position="20"/>
    </location>
</feature>
<feature type="chain" id="PRO_0000024002" description="Non-specific acid phosphatase">
    <location>
        <begin position="21"/>
        <end position="250"/>
    </location>
</feature>
<name>PHON_SALTY</name>
<accession>P26976</accession>
<sequence length="250" mass="28382">MKSRYLVFFLPLIVAKYTSAETVQPFHSPEESVNSQFYLPPPPGNDDPAYRYDKEAYFKGYAIKGSPRWKQAAEDADVSVENIARIFSPVVGAKINPKDTPETWNMLKNLLTMGGYYATASAKKYYMRTRPFVLFNHSTCRPEDENTLRKNGSYPSGHTAYGTLLALVLSEARPERAQELARRGWEFGQSRVICGAHWQSDVDAGRYVGAVEFARLQTIPAFQKSLAKVREELNDKNNLLSKEDHPKLNY</sequence>
<reference key="1">
    <citation type="journal article" date="1992" name="EMBO J.">
        <title>Horizontal transfer of a phosphatase gene as evidence for mosaic structure of the Salmonella genome.</title>
        <authorList>
            <person name="Groisman E.A."/>
            <person name="Saier M.H. Jr."/>
            <person name="Ochman H."/>
        </authorList>
    </citation>
    <scope>NUCLEOTIDE SEQUENCE [GENOMIC DNA]</scope>
    <source>
        <strain>ATCC 14028 / SGSG 2980 / CDC 6516-60 / NCTC 12023</strain>
    </source>
</reference>
<reference key="2">
    <citation type="journal article" date="1991" name="J. Bacteriol.">
        <title>Molecular analysis of the Salmonella typhimurium phoN gene, which encodes nonspecific acid phosphatase.</title>
        <authorList>
            <person name="Kasahara M."/>
            <person name="Nakata A."/>
            <person name="Shinagawa H."/>
        </authorList>
    </citation>
    <scope>NUCLEOTIDE SEQUENCE [GENOMIC DNA]</scope>
    <source>
        <strain>LT2</strain>
    </source>
</reference>
<reference key="3">
    <citation type="journal article" date="2001" name="Nature">
        <title>Complete genome sequence of Salmonella enterica serovar Typhimurium LT2.</title>
        <authorList>
            <person name="McClelland M."/>
            <person name="Sanderson K.E."/>
            <person name="Spieth J."/>
            <person name="Clifton S.W."/>
            <person name="Latreille P."/>
            <person name="Courtney L."/>
            <person name="Porwollik S."/>
            <person name="Ali J."/>
            <person name="Dante M."/>
            <person name="Du F."/>
            <person name="Hou S."/>
            <person name="Layman D."/>
            <person name="Leonard S."/>
            <person name="Nguyen C."/>
            <person name="Scott K."/>
            <person name="Holmes A."/>
            <person name="Grewal N."/>
            <person name="Mulvaney E."/>
            <person name="Ryan E."/>
            <person name="Sun H."/>
            <person name="Florea L."/>
            <person name="Miller W."/>
            <person name="Stoneking T."/>
            <person name="Nhan M."/>
            <person name="Waterston R."/>
            <person name="Wilson R.K."/>
        </authorList>
    </citation>
    <scope>NUCLEOTIDE SEQUENCE [LARGE SCALE GENOMIC DNA]</scope>
    <source>
        <strain>LT2 / SGSC1412 / ATCC 700720</strain>
    </source>
</reference>
<keyword id="KW-0378">Hydrolase</keyword>
<keyword id="KW-0574">Periplasm</keyword>
<keyword id="KW-1185">Reference proteome</keyword>
<keyword id="KW-0732">Signal</keyword>
<organism>
    <name type="scientific">Salmonella typhimurium (strain LT2 / SGSC1412 / ATCC 700720)</name>
    <dbReference type="NCBI Taxonomy" id="99287"/>
    <lineage>
        <taxon>Bacteria</taxon>
        <taxon>Pseudomonadati</taxon>
        <taxon>Pseudomonadota</taxon>
        <taxon>Gammaproteobacteria</taxon>
        <taxon>Enterobacterales</taxon>
        <taxon>Enterobacteriaceae</taxon>
        <taxon>Salmonella</taxon>
    </lineage>
</organism>
<protein>
    <recommendedName>
        <fullName>Non-specific acid phosphatase</fullName>
        <shortName>NSAP</shortName>
        <ecNumber>3.1.3.2</ecNumber>
    </recommendedName>
</protein>
<gene>
    <name type="primary">phoN</name>
    <name type="ordered locus">STM4319</name>
</gene>
<comment type="catalytic activity">
    <reaction>
        <text>a phosphate monoester + H2O = an alcohol + phosphate</text>
        <dbReference type="Rhea" id="RHEA:15017"/>
        <dbReference type="ChEBI" id="CHEBI:15377"/>
        <dbReference type="ChEBI" id="CHEBI:30879"/>
        <dbReference type="ChEBI" id="CHEBI:43474"/>
        <dbReference type="ChEBI" id="CHEBI:67140"/>
        <dbReference type="EC" id="3.1.3.2"/>
    </reaction>
</comment>
<comment type="subunit">
    <text evidence="2">Homodimer.</text>
</comment>
<comment type="subcellular location">
    <subcellularLocation>
        <location>Periplasm</location>
    </subcellularLocation>
</comment>
<comment type="similarity">
    <text evidence="2">Belongs to the class A bacterial acid phosphatase family.</text>
</comment>
<comment type="sequence caution" evidence="2">
    <conflict type="frameshift">
        <sequence resource="EMBL-CDS" id="CAA41760"/>
    </conflict>
</comment>
<dbReference type="EC" id="3.1.3.2"/>
<dbReference type="EMBL" id="X63599">
    <property type="protein sequence ID" value="CAA45144.1"/>
    <property type="molecule type" value="Genomic_DNA"/>
</dbReference>
<dbReference type="EMBL" id="X59036">
    <property type="protein sequence ID" value="CAA41760.1"/>
    <property type="status" value="ALT_FRAME"/>
    <property type="molecule type" value="Genomic_DNA"/>
</dbReference>
<dbReference type="EMBL" id="AE006468">
    <property type="protein sequence ID" value="AAL23143.1"/>
    <property type="molecule type" value="Genomic_DNA"/>
</dbReference>
<dbReference type="PIR" id="S20958">
    <property type="entry name" value="A41330"/>
</dbReference>
<dbReference type="RefSeq" id="NP_463184.1">
    <property type="nucleotide sequence ID" value="NC_003197.2"/>
</dbReference>
<dbReference type="RefSeq" id="WP_000842434.1">
    <property type="nucleotide sequence ID" value="NC_003197.2"/>
</dbReference>
<dbReference type="SMR" id="P26976"/>
<dbReference type="STRING" id="99287.STM4319"/>
<dbReference type="PaxDb" id="99287-STM4319"/>
<dbReference type="GeneID" id="1255845"/>
<dbReference type="KEGG" id="stm:STM4319"/>
<dbReference type="PATRIC" id="fig|99287.12.peg.4542"/>
<dbReference type="HOGENOM" id="CLU_079861_0_0_6"/>
<dbReference type="OMA" id="PICVART"/>
<dbReference type="PhylomeDB" id="P26976"/>
<dbReference type="BioCyc" id="SENT99287:STM4319-MONOMER"/>
<dbReference type="SABIO-RK" id="P26976"/>
<dbReference type="PHI-base" id="PHI:8756"/>
<dbReference type="Proteomes" id="UP000001014">
    <property type="component" value="Chromosome"/>
</dbReference>
<dbReference type="GO" id="GO:0030288">
    <property type="term" value="C:outer membrane-bounded periplasmic space"/>
    <property type="evidence" value="ECO:0007669"/>
    <property type="project" value="InterPro"/>
</dbReference>
<dbReference type="GO" id="GO:0003993">
    <property type="term" value="F:acid phosphatase activity"/>
    <property type="evidence" value="ECO:0007669"/>
    <property type="project" value="UniProtKB-EC"/>
</dbReference>
<dbReference type="CDD" id="cd03397">
    <property type="entry name" value="PAP2_acid_phosphatase"/>
    <property type="match status" value="1"/>
</dbReference>
<dbReference type="Gene3D" id="1.20.144.10">
    <property type="entry name" value="Phosphatidic acid phosphatase type 2/haloperoxidase"/>
    <property type="match status" value="1"/>
</dbReference>
<dbReference type="InterPro" id="IPR001011">
    <property type="entry name" value="Acid_Pase_classA_bac"/>
</dbReference>
<dbReference type="InterPro" id="IPR018296">
    <property type="entry name" value="Acid_Pase_classA_bac_CS"/>
</dbReference>
<dbReference type="InterPro" id="IPR036938">
    <property type="entry name" value="P_Acid_Pase_2/haloperoxi_sf"/>
</dbReference>
<dbReference type="InterPro" id="IPR000326">
    <property type="entry name" value="P_Acid_Pase_2/haloperoxidase"/>
</dbReference>
<dbReference type="Pfam" id="PF01569">
    <property type="entry name" value="PAP2"/>
    <property type="match status" value="1"/>
</dbReference>
<dbReference type="PIRSF" id="PIRSF000897">
    <property type="entry name" value="Acid_Ptase_ClsA"/>
    <property type="match status" value="1"/>
</dbReference>
<dbReference type="PRINTS" id="PR00483">
    <property type="entry name" value="BACPHPHTASE"/>
</dbReference>
<dbReference type="SMART" id="SM00014">
    <property type="entry name" value="acidPPc"/>
    <property type="match status" value="1"/>
</dbReference>
<dbReference type="SUPFAM" id="SSF48317">
    <property type="entry name" value="Acid phosphatase/Vanadium-dependent haloperoxidase"/>
    <property type="match status" value="1"/>
</dbReference>
<dbReference type="PROSITE" id="PS01157">
    <property type="entry name" value="ACID_PHOSPH_CL_A"/>
    <property type="match status" value="1"/>
</dbReference>
<evidence type="ECO:0000255" key="1"/>
<evidence type="ECO:0000305" key="2"/>
<proteinExistence type="inferred from homology"/>